<comment type="function">
    <text evidence="3 4">Plays a critical role during packaging of viral DNA into empty capsids, where they are thought to be part of the packaging motor complex. The single stranded genomic DNA is packaged in a 3' to 5' direction and requires the association of viral DNA with Rep40.</text>
</comment>
<comment type="catalytic activity">
    <reaction>
        <text>ATP + H2O = ADP + phosphate + H(+)</text>
        <dbReference type="Rhea" id="RHEA:13065"/>
        <dbReference type="ChEBI" id="CHEBI:15377"/>
        <dbReference type="ChEBI" id="CHEBI:15378"/>
        <dbReference type="ChEBI" id="CHEBI:30616"/>
        <dbReference type="ChEBI" id="CHEBI:43474"/>
        <dbReference type="ChEBI" id="CHEBI:456216"/>
        <dbReference type="EC" id="3.6.4.12"/>
    </reaction>
</comment>
<comment type="subunit">
    <text evidence="6">Homooligomer.</text>
</comment>
<comment type="subcellular location">
    <subcellularLocation>
        <location evidence="5">Host nucleus</location>
    </subcellularLocation>
</comment>
<sequence length="312" mass="34965">MELVGWLVDKGITSEKQWIQEDQASYISFNAASNSRSQIKAALDNAGKIMSLTKTAPDYLVGQQPVEDISSNRIYKILELNGYDPQYAASVFLGWATKKFGKRNTIWLFGPATTGKTNIAEAIAHTVPFYGCVNWTNENFPFNDCVDKMVIWWEEGKMTAKVVESAKAILGGSKVRVDQKCKSSAQIDPTPVIVTSNTNMCAVIDGNSTTFEHQQPLQDRMFKFELTRRLDHDFGKVTKQEVKDFFRWAKDHVVEVEHEFYVKKGGAKKRPAPSDADISEPKRVRESVAQPSTSDAEASINYADRLARGHSL</sequence>
<name>REP40_AAV2S</name>
<proteinExistence type="evidence at protein level"/>
<dbReference type="EC" id="3.6.4.12"/>
<dbReference type="EMBL" id="AF043303">
    <property type="protein sequence ID" value="AAC03776.1"/>
    <property type="molecule type" value="Genomic_DNA"/>
</dbReference>
<dbReference type="EMBL" id="J01901">
    <property type="protein sequence ID" value="AAA42373.1"/>
    <property type="molecule type" value="Genomic_DNA"/>
</dbReference>
<dbReference type="RefSeq" id="YP_680424.1">
    <property type="nucleotide sequence ID" value="NC_001401.2"/>
</dbReference>
<dbReference type="SMR" id="Q89269"/>
<dbReference type="IntAct" id="Q89269">
    <property type="interactions" value="1"/>
</dbReference>
<dbReference type="KEGG" id="vg:4192014"/>
<dbReference type="Proteomes" id="UP000008469">
    <property type="component" value="Genome"/>
</dbReference>
<dbReference type="Proteomes" id="UP000180764">
    <property type="component" value="Segment"/>
</dbReference>
<dbReference type="GO" id="GO:0042025">
    <property type="term" value="C:host cell nucleus"/>
    <property type="evidence" value="ECO:0007669"/>
    <property type="project" value="UniProtKB-SubCell"/>
</dbReference>
<dbReference type="GO" id="GO:0005524">
    <property type="term" value="F:ATP binding"/>
    <property type="evidence" value="ECO:0007669"/>
    <property type="project" value="UniProtKB-KW"/>
</dbReference>
<dbReference type="GO" id="GO:0016887">
    <property type="term" value="F:ATP hydrolysis activity"/>
    <property type="evidence" value="ECO:0007669"/>
    <property type="project" value="RHEA"/>
</dbReference>
<dbReference type="GO" id="GO:0006260">
    <property type="term" value="P:DNA replication"/>
    <property type="evidence" value="ECO:0007669"/>
    <property type="project" value="UniProtKB-KW"/>
</dbReference>
<dbReference type="GO" id="GO:0019079">
    <property type="term" value="P:viral genome replication"/>
    <property type="evidence" value="ECO:0007669"/>
    <property type="project" value="InterPro"/>
</dbReference>
<dbReference type="FunFam" id="3.40.50.300:FF:003161">
    <property type="entry name" value="Protein Rep68"/>
    <property type="match status" value="1"/>
</dbReference>
<dbReference type="Gene3D" id="1.10.10.950">
    <property type="match status" value="1"/>
</dbReference>
<dbReference type="Gene3D" id="3.40.50.300">
    <property type="entry name" value="P-loop containing nucleotide triphosphate hydrolases"/>
    <property type="match status" value="1"/>
</dbReference>
<dbReference type="InterPro" id="IPR014015">
    <property type="entry name" value="Helicase_SF3_DNA-vir"/>
</dbReference>
<dbReference type="InterPro" id="IPR027417">
    <property type="entry name" value="P-loop_NTPase"/>
</dbReference>
<dbReference type="InterPro" id="IPR001257">
    <property type="entry name" value="Parvovirus_NS1_helicase"/>
</dbReference>
<dbReference type="Pfam" id="PF01057">
    <property type="entry name" value="Parvo_NS1"/>
    <property type="match status" value="1"/>
</dbReference>
<dbReference type="SUPFAM" id="SSF52540">
    <property type="entry name" value="P-loop containing nucleoside triphosphate hydrolases"/>
    <property type="match status" value="1"/>
</dbReference>
<dbReference type="PROSITE" id="PS51206">
    <property type="entry name" value="SF3_HELICASE_1"/>
    <property type="match status" value="1"/>
</dbReference>
<organismHost>
    <name type="scientific">Mammalia</name>
    <dbReference type="NCBI Taxonomy" id="40674"/>
</organismHost>
<feature type="chain" id="PRO_0000428951" description="Protein Rep40">
    <location>
        <begin position="1"/>
        <end position="312"/>
    </location>
</feature>
<feature type="domain" description="SF3 helicase" evidence="1">
    <location>
        <begin position="84"/>
        <end position="239"/>
    </location>
</feature>
<feature type="region of interest" description="Disordered" evidence="2">
    <location>
        <begin position="264"/>
        <end position="301"/>
    </location>
</feature>
<feature type="binding site" evidence="1">
    <location>
        <begin position="110"/>
        <end position="117"/>
    </location>
    <ligand>
        <name>ATP</name>
        <dbReference type="ChEBI" id="CHEBI:30616"/>
    </ligand>
</feature>
<evidence type="ECO:0000255" key="1">
    <source>
        <dbReference type="PROSITE-ProRule" id="PRU00551"/>
    </source>
</evidence>
<evidence type="ECO:0000256" key="2">
    <source>
        <dbReference type="SAM" id="MobiDB-lite"/>
    </source>
</evidence>
<evidence type="ECO:0000269" key="3">
    <source>
    </source>
</evidence>
<evidence type="ECO:0000269" key="4">
    <source>
    </source>
</evidence>
<evidence type="ECO:0000269" key="5">
    <source>
    </source>
</evidence>
<evidence type="ECO:0000269" key="6">
    <source>
    </source>
</evidence>
<organism>
    <name type="scientific">Adeno-associated virus 2 (isolate Srivastava/1982)</name>
    <name type="common">AAV-2</name>
    <dbReference type="NCBI Taxonomy" id="648242"/>
    <lineage>
        <taxon>Viruses</taxon>
        <taxon>Monodnaviria</taxon>
        <taxon>Shotokuvirae</taxon>
        <taxon>Cossaviricota</taxon>
        <taxon>Quintoviricetes</taxon>
        <taxon>Piccovirales</taxon>
        <taxon>Parvoviridae</taxon>
        <taxon>Parvovirinae</taxon>
        <taxon>Dependoparvovirus</taxon>
        <taxon>Dependoparvovirus primate1</taxon>
    </lineage>
</organism>
<reference key="1">
    <citation type="journal article" date="1983" name="J. Virol.">
        <title>Nucleotide sequence and organization of the adeno-associated virus 2 genome.</title>
        <authorList>
            <person name="Srivastava A."/>
            <person name="Lusby E.W."/>
            <person name="Berns K.I."/>
        </authorList>
    </citation>
    <scope>NUCLEOTIDE SEQUENCE [GENOMIC DNA]</scope>
</reference>
<reference key="2">
    <citation type="journal article" date="1994" name="J. Gen. Virol.">
        <title>Mutations in the carboxy terminus of adeno-associated virus 2 capsid proteins affect viral infectivity: lack of an RGD integrin-binding motif.</title>
        <authorList>
            <person name="Ruffing M."/>
            <person name="Heid H."/>
            <person name="Kleinschmidt J.A."/>
        </authorList>
    </citation>
    <scope>NUCLEOTIDE SEQUENCE [GENOMIC DNA]</scope>
</reference>
<reference key="3">
    <citation type="submission" date="1998-01" db="EMBL/GenBank/DDBJ databases">
        <authorList>
            <person name="Berns K.I."/>
            <person name="Bohenzky R.A."/>
            <person name="Cassinotti P."/>
            <person name="Colvin D."/>
            <person name="Donahue B.A."/>
            <person name="Dull T."/>
            <person name="Horer M."/>
            <person name="Kleinschmidt J.A."/>
            <person name="Ruffing M."/>
            <person name="Snyder R.O."/>
            <person name="Tratschin J.-D."/>
            <person name="Weitz M."/>
        </authorList>
    </citation>
    <scope>NUCLEOTIDE SEQUENCE [GENOMIC DNA]</scope>
</reference>
<reference key="4">
    <citation type="journal article" date="1992" name="J. Virol.">
        <title>Colocalization of adeno-associated virus Rep and capsid proteins in the nuclei of infected cells.</title>
        <authorList>
            <person name="Hunter L.A."/>
            <person name="Samulski R.J."/>
        </authorList>
    </citation>
    <scope>SUBCELLULAR LOCATION</scope>
</reference>
<reference key="5">
    <citation type="journal article" date="2001" name="EMBO J.">
        <title>DNA helicase-mediated packaging of adeno-associated virus type 2 genomes into preformed capsids.</title>
        <authorList>
            <person name="King J.A."/>
            <person name="Dubielzig R."/>
            <person name="Grimm D."/>
            <person name="Kleinschmidt J.A."/>
        </authorList>
    </citation>
    <scope>FUNCTION</scope>
</reference>
<reference key="6">
    <citation type="journal article" date="2003" name="J. Biol. Chem.">
        <title>A biochemical characterization of the adeno-associated virus Rep40 helicase.</title>
        <authorList>
            <person name="Collaco R.F."/>
            <person name="Kalman-Maltese V."/>
            <person name="Smith A.D."/>
            <person name="Dignam J.D."/>
            <person name="Trempe J.P."/>
        </authorList>
    </citation>
    <scope>FUNCTION</scope>
</reference>
<reference key="7">
    <citation type="journal article" date="2007" name="Biochemistry">
        <title>Coupled ATP and DNA binding of adeno-associated virus Rep40 helicase.</title>
        <authorList>
            <person name="Dignam S.S."/>
            <person name="Collaco R.F."/>
            <person name="Bieszczad J."/>
            <person name="Needham P."/>
            <person name="Trempe J.P."/>
            <person name="Dignam J.D."/>
        </authorList>
    </citation>
    <scope>SUBUNIT</scope>
</reference>
<accession>Q89269</accession>
<accession>Q77XY0</accession>
<gene>
    <name type="primary">Rep40</name>
</gene>
<protein>
    <recommendedName>
        <fullName>Protein Rep40</fullName>
        <ecNumber>3.6.4.12</ecNumber>
    </recommendedName>
</protein>
<keyword id="KW-0067">ATP-binding</keyword>
<keyword id="KW-0235">DNA replication</keyword>
<keyword id="KW-1048">Host nucleus</keyword>
<keyword id="KW-0378">Hydrolase</keyword>
<keyword id="KW-0547">Nucleotide-binding</keyword>
<keyword id="KW-1185">Reference proteome</keyword>